<gene>
    <name evidence="6" type="primary">khtT</name>
    <name type="synonym">yhaT</name>
    <name type="ordered locus">BSU09860</name>
</gene>
<protein>
    <recommendedName>
        <fullName evidence="7">K(+)/H(+) antiporter subunit KhtT</fullName>
    </recommendedName>
</protein>
<proteinExistence type="evidence at protein level"/>
<feature type="chain" id="PRO_0000360835" description="K(+)/H(+) antiporter subunit KhtT">
    <location>
        <begin position="1"/>
        <end position="165"/>
    </location>
</feature>
<feature type="domain" description="RCK C-terminal" evidence="1">
    <location>
        <begin position="76"/>
        <end position="161"/>
    </location>
</feature>
<feature type="strand" evidence="10">
    <location>
        <begin position="2"/>
        <end position="8"/>
    </location>
</feature>
<feature type="turn" evidence="10">
    <location>
        <begin position="9"/>
        <end position="11"/>
    </location>
</feature>
<feature type="strand" evidence="10">
    <location>
        <begin position="12"/>
        <end position="18"/>
    </location>
</feature>
<feature type="strand" evidence="10">
    <location>
        <begin position="24"/>
        <end position="30"/>
    </location>
</feature>
<feature type="strand" evidence="10">
    <location>
        <begin position="35"/>
        <end position="40"/>
    </location>
</feature>
<feature type="strand" evidence="10">
    <location>
        <begin position="48"/>
        <end position="54"/>
    </location>
</feature>
<feature type="helix" evidence="10">
    <location>
        <begin position="56"/>
        <end position="66"/>
    </location>
</feature>
<feature type="strand" evidence="9">
    <location>
        <begin position="69"/>
        <end position="71"/>
    </location>
</feature>
<feature type="strand" evidence="9">
    <location>
        <begin position="77"/>
        <end position="80"/>
    </location>
</feature>
<feature type="strand" evidence="9">
    <location>
        <begin position="87"/>
        <end position="92"/>
    </location>
</feature>
<feature type="turn" evidence="9">
    <location>
        <begin position="98"/>
        <end position="101"/>
    </location>
</feature>
<feature type="helix" evidence="9">
    <location>
        <begin position="104"/>
        <end position="107"/>
    </location>
</feature>
<feature type="helix" evidence="9">
    <location>
        <begin position="109"/>
        <end position="113"/>
    </location>
</feature>
<feature type="strand" evidence="9">
    <location>
        <begin position="116"/>
        <end position="121"/>
    </location>
</feature>
<feature type="turn" evidence="11">
    <location>
        <begin position="123"/>
        <end position="125"/>
    </location>
</feature>
<feature type="strand" evidence="9">
    <location>
        <begin position="127"/>
        <end position="130"/>
    </location>
</feature>
<feature type="strand" evidence="9">
    <location>
        <begin position="142"/>
        <end position="147"/>
    </location>
</feature>
<feature type="helix" evidence="9">
    <location>
        <begin position="149"/>
        <end position="157"/>
    </location>
</feature>
<dbReference type="EMBL" id="Y14080">
    <property type="protein sequence ID" value="CAA74452.1"/>
    <property type="molecule type" value="Genomic_DNA"/>
</dbReference>
<dbReference type="EMBL" id="AL009126">
    <property type="protein sequence ID" value="CAB12826.1"/>
    <property type="molecule type" value="Genomic_DNA"/>
</dbReference>
<dbReference type="PIR" id="F69819">
    <property type="entry name" value="F69819"/>
</dbReference>
<dbReference type="RefSeq" id="NP_388867.1">
    <property type="nucleotide sequence ID" value="NC_000964.3"/>
</dbReference>
<dbReference type="RefSeq" id="WP_003233269.1">
    <property type="nucleotide sequence ID" value="NZ_OZ025638.1"/>
</dbReference>
<dbReference type="PDB" id="7AGV">
    <property type="method" value="X-ray"/>
    <property type="resolution" value="1.85 A"/>
    <property type="chains" value="A/B/C/D/E/F/G/H=2-165"/>
</dbReference>
<dbReference type="PDB" id="7AGW">
    <property type="method" value="X-ray"/>
    <property type="resolution" value="1.51 A"/>
    <property type="chains" value="A/B=2-68"/>
</dbReference>
<dbReference type="PDB" id="7AGY">
    <property type="method" value="X-ray"/>
    <property type="resolution" value="1.54 A"/>
    <property type="chains" value="A/B=2-68"/>
</dbReference>
<dbReference type="PDB" id="7AHM">
    <property type="method" value="X-ray"/>
    <property type="resolution" value="3.14 A"/>
    <property type="chains" value="A/B/C/D=2-165"/>
</dbReference>
<dbReference type="PDB" id="7AHT">
    <property type="method" value="X-ray"/>
    <property type="resolution" value="2.16 A"/>
    <property type="chains" value="A/B=2-68"/>
</dbReference>
<dbReference type="PDBsum" id="7AGV"/>
<dbReference type="PDBsum" id="7AGW"/>
<dbReference type="PDBsum" id="7AGY"/>
<dbReference type="PDBsum" id="7AHM"/>
<dbReference type="PDBsum" id="7AHT"/>
<dbReference type="SMR" id="O07535"/>
<dbReference type="FunCoup" id="O07535">
    <property type="interactions" value="10"/>
</dbReference>
<dbReference type="STRING" id="224308.BSU09860"/>
<dbReference type="TCDB" id="2.A.37.5.2">
    <property type="family name" value="the monovalent cation:proton antiporter-2 (cpa2) family"/>
</dbReference>
<dbReference type="PaxDb" id="224308-BSU09860"/>
<dbReference type="EnsemblBacteria" id="CAB12826">
    <property type="protein sequence ID" value="CAB12826"/>
    <property type="gene ID" value="BSU_09860"/>
</dbReference>
<dbReference type="GeneID" id="936284"/>
<dbReference type="KEGG" id="bsu:BSU09860"/>
<dbReference type="PATRIC" id="fig|224308.179.peg.1058"/>
<dbReference type="eggNOG" id="COG0490">
    <property type="taxonomic scope" value="Bacteria"/>
</dbReference>
<dbReference type="InParanoid" id="O07535"/>
<dbReference type="OrthoDB" id="67547at2"/>
<dbReference type="PhylomeDB" id="O07535"/>
<dbReference type="BioCyc" id="BSUB:BSU09860-MONOMER"/>
<dbReference type="Proteomes" id="UP000001570">
    <property type="component" value="Chromosome"/>
</dbReference>
<dbReference type="GO" id="GO:0005886">
    <property type="term" value="C:plasma membrane"/>
    <property type="evidence" value="ECO:0000318"/>
    <property type="project" value="GO_Central"/>
</dbReference>
<dbReference type="GO" id="GO:0008324">
    <property type="term" value="F:monoatomic cation transmembrane transporter activity"/>
    <property type="evidence" value="ECO:0007669"/>
    <property type="project" value="InterPro"/>
</dbReference>
<dbReference type="GO" id="GO:0006813">
    <property type="term" value="P:potassium ion transport"/>
    <property type="evidence" value="ECO:0007669"/>
    <property type="project" value="InterPro"/>
</dbReference>
<dbReference type="Gene3D" id="3.30.70.1450">
    <property type="entry name" value="Regulator of K+ conductance, C-terminal domain"/>
    <property type="match status" value="1"/>
</dbReference>
<dbReference type="InterPro" id="IPR050144">
    <property type="entry name" value="AAE_transporter"/>
</dbReference>
<dbReference type="InterPro" id="IPR026278">
    <property type="entry name" value="K(+)/H(+)_antiporter_KhtT"/>
</dbReference>
<dbReference type="InterPro" id="IPR006037">
    <property type="entry name" value="RCK_C"/>
</dbReference>
<dbReference type="InterPro" id="IPR036721">
    <property type="entry name" value="RCK_C_sf"/>
</dbReference>
<dbReference type="PANTHER" id="PTHR30445">
    <property type="entry name" value="K(+)_H(+) ANTIPORTER SUBUNIT KHTT"/>
    <property type="match status" value="1"/>
</dbReference>
<dbReference type="PANTHER" id="PTHR30445:SF8">
    <property type="entry name" value="K(+)_H(+) ANTIPORTER SUBUNIT KHTT"/>
    <property type="match status" value="1"/>
</dbReference>
<dbReference type="Pfam" id="PF02080">
    <property type="entry name" value="TrkA_C"/>
    <property type="match status" value="1"/>
</dbReference>
<dbReference type="PIRSF" id="PIRSF005028">
    <property type="entry name" value="KhtT"/>
    <property type="match status" value="1"/>
</dbReference>
<dbReference type="SUPFAM" id="SSF116726">
    <property type="entry name" value="TrkA C-terminal domain-like"/>
    <property type="match status" value="1"/>
</dbReference>
<dbReference type="PROSITE" id="PS51202">
    <property type="entry name" value="RCK_C"/>
    <property type="match status" value="1"/>
</dbReference>
<keyword id="KW-0002">3D-structure</keyword>
<keyword id="KW-1003">Cell membrane</keyword>
<keyword id="KW-0472">Membrane</keyword>
<keyword id="KW-1185">Reference proteome</keyword>
<sequence>MNIKENDLPGIGKKFEIETRSHEKMTIIIHDDGRREIYRFNDRDPDELLSNISLDDSEARQIAAILGGMVYKPQALESIEMAFSDLIIEWFKVEKGAKSIGRTLGELDVRQNYDVTVIAIIKHNQEKLLNPGADSIIEENDTLVLSGERKHLKKLIHDFLSGEGV</sequence>
<organism>
    <name type="scientific">Bacillus subtilis (strain 168)</name>
    <dbReference type="NCBI Taxonomy" id="224308"/>
    <lineage>
        <taxon>Bacteria</taxon>
        <taxon>Bacillati</taxon>
        <taxon>Bacillota</taxon>
        <taxon>Bacilli</taxon>
        <taxon>Bacillales</taxon>
        <taxon>Bacillaceae</taxon>
        <taxon>Bacillus</taxon>
    </lineage>
</organism>
<reference key="1">
    <citation type="journal article" date="1998" name="Microbiology">
        <title>The 172 kb prkA-addAB region from 83 degrees to 97 degrees of the Bacillus subtilis chromosome contains several dysfunctional genes, the glyB marker, many genes encoding transporter proteins, and the ubiquitous hit gene.</title>
        <authorList>
            <person name="Noback M.A."/>
            <person name="Holsappel S."/>
            <person name="Kiewiet R."/>
            <person name="Terpstra P."/>
            <person name="Wambutt R."/>
            <person name="Wedler H."/>
            <person name="Venema G."/>
            <person name="Bron S."/>
        </authorList>
    </citation>
    <scope>NUCLEOTIDE SEQUENCE [GENOMIC DNA]</scope>
    <source>
        <strain>168</strain>
    </source>
</reference>
<reference key="2">
    <citation type="journal article" date="1997" name="Nature">
        <title>The complete genome sequence of the Gram-positive bacterium Bacillus subtilis.</title>
        <authorList>
            <person name="Kunst F."/>
            <person name="Ogasawara N."/>
            <person name="Moszer I."/>
            <person name="Albertini A.M."/>
            <person name="Alloni G."/>
            <person name="Azevedo V."/>
            <person name="Bertero M.G."/>
            <person name="Bessieres P."/>
            <person name="Bolotin A."/>
            <person name="Borchert S."/>
            <person name="Borriss R."/>
            <person name="Boursier L."/>
            <person name="Brans A."/>
            <person name="Braun M."/>
            <person name="Brignell S.C."/>
            <person name="Bron S."/>
            <person name="Brouillet S."/>
            <person name="Bruschi C.V."/>
            <person name="Caldwell B."/>
            <person name="Capuano V."/>
            <person name="Carter N.M."/>
            <person name="Choi S.-K."/>
            <person name="Codani J.-J."/>
            <person name="Connerton I.F."/>
            <person name="Cummings N.J."/>
            <person name="Daniel R.A."/>
            <person name="Denizot F."/>
            <person name="Devine K.M."/>
            <person name="Duesterhoeft A."/>
            <person name="Ehrlich S.D."/>
            <person name="Emmerson P.T."/>
            <person name="Entian K.-D."/>
            <person name="Errington J."/>
            <person name="Fabret C."/>
            <person name="Ferrari E."/>
            <person name="Foulger D."/>
            <person name="Fritz C."/>
            <person name="Fujita M."/>
            <person name="Fujita Y."/>
            <person name="Fuma S."/>
            <person name="Galizzi A."/>
            <person name="Galleron N."/>
            <person name="Ghim S.-Y."/>
            <person name="Glaser P."/>
            <person name="Goffeau A."/>
            <person name="Golightly E.J."/>
            <person name="Grandi G."/>
            <person name="Guiseppi G."/>
            <person name="Guy B.J."/>
            <person name="Haga K."/>
            <person name="Haiech J."/>
            <person name="Harwood C.R."/>
            <person name="Henaut A."/>
            <person name="Hilbert H."/>
            <person name="Holsappel S."/>
            <person name="Hosono S."/>
            <person name="Hullo M.-F."/>
            <person name="Itaya M."/>
            <person name="Jones L.-M."/>
            <person name="Joris B."/>
            <person name="Karamata D."/>
            <person name="Kasahara Y."/>
            <person name="Klaerr-Blanchard M."/>
            <person name="Klein C."/>
            <person name="Kobayashi Y."/>
            <person name="Koetter P."/>
            <person name="Koningstein G."/>
            <person name="Krogh S."/>
            <person name="Kumano M."/>
            <person name="Kurita K."/>
            <person name="Lapidus A."/>
            <person name="Lardinois S."/>
            <person name="Lauber J."/>
            <person name="Lazarevic V."/>
            <person name="Lee S.-M."/>
            <person name="Levine A."/>
            <person name="Liu H."/>
            <person name="Masuda S."/>
            <person name="Mauel C."/>
            <person name="Medigue C."/>
            <person name="Medina N."/>
            <person name="Mellado R.P."/>
            <person name="Mizuno M."/>
            <person name="Moestl D."/>
            <person name="Nakai S."/>
            <person name="Noback M."/>
            <person name="Noone D."/>
            <person name="O'Reilly M."/>
            <person name="Ogawa K."/>
            <person name="Ogiwara A."/>
            <person name="Oudega B."/>
            <person name="Park S.-H."/>
            <person name="Parro V."/>
            <person name="Pohl T.M."/>
            <person name="Portetelle D."/>
            <person name="Porwollik S."/>
            <person name="Prescott A.M."/>
            <person name="Presecan E."/>
            <person name="Pujic P."/>
            <person name="Purnelle B."/>
            <person name="Rapoport G."/>
            <person name="Rey M."/>
            <person name="Reynolds S."/>
            <person name="Rieger M."/>
            <person name="Rivolta C."/>
            <person name="Rocha E."/>
            <person name="Roche B."/>
            <person name="Rose M."/>
            <person name="Sadaie Y."/>
            <person name="Sato T."/>
            <person name="Scanlan E."/>
            <person name="Schleich S."/>
            <person name="Schroeter R."/>
            <person name="Scoffone F."/>
            <person name="Sekiguchi J."/>
            <person name="Sekowska A."/>
            <person name="Seror S.J."/>
            <person name="Serror P."/>
            <person name="Shin B.-S."/>
            <person name="Soldo B."/>
            <person name="Sorokin A."/>
            <person name="Tacconi E."/>
            <person name="Takagi T."/>
            <person name="Takahashi H."/>
            <person name="Takemaru K."/>
            <person name="Takeuchi M."/>
            <person name="Tamakoshi A."/>
            <person name="Tanaka T."/>
            <person name="Terpstra P."/>
            <person name="Tognoni A."/>
            <person name="Tosato V."/>
            <person name="Uchiyama S."/>
            <person name="Vandenbol M."/>
            <person name="Vannier F."/>
            <person name="Vassarotti A."/>
            <person name="Viari A."/>
            <person name="Wambutt R."/>
            <person name="Wedler E."/>
            <person name="Wedler H."/>
            <person name="Weitzenegger T."/>
            <person name="Winters P."/>
            <person name="Wipat A."/>
            <person name="Yamamoto H."/>
            <person name="Yamane K."/>
            <person name="Yasumoto K."/>
            <person name="Yata K."/>
            <person name="Yoshida K."/>
            <person name="Yoshikawa H.-F."/>
            <person name="Zumstein E."/>
            <person name="Yoshikawa H."/>
            <person name="Danchin A."/>
        </authorList>
    </citation>
    <scope>NUCLEOTIDE SEQUENCE [LARGE SCALE GENOMIC DNA]</scope>
    <source>
        <strain>168</strain>
    </source>
</reference>
<reference key="3">
    <citation type="journal article" date="2004" name="FEMS Microbiol. Lett.">
        <title>Modulation of the K+ efflux activity of Bacillus subtilis YhaU by YhaT and the C-terminal region of YhaS.</title>
        <authorList>
            <person name="Fujisawa M."/>
            <person name="Wada Y."/>
            <person name="Ito M."/>
        </authorList>
    </citation>
    <scope>FUNCTION</scope>
    <scope>SUBUNIT</scope>
    <scope>SUBCELLULAR LOCATION</scope>
    <scope>IDENTIFICATION OF THE KHTSTU OPERON</scope>
    <scope>INDUCTION</scope>
</reference>
<reference key="4">
    <citation type="journal article" date="2007" name="Proc. Natl. Acad. Sci. U.S.A.">
        <title>Three two-component transporters with channel-like properties have monovalent cation/proton antiport activity.</title>
        <authorList>
            <person name="Fujisawa M."/>
            <person name="Ito M."/>
            <person name="Krulwich T.A."/>
        </authorList>
    </citation>
    <scope>FUNCTION</scope>
    <scope>SUBUNIT</scope>
</reference>
<reference key="5">
    <citation type="journal article" date="2014" name="Mol. Microbiol.">
        <title>Methylglyoxal resistance in Bacillus subtilis: contributions of bacillithiol-dependent and independent pathways.</title>
        <authorList>
            <person name="Chandrangsu P."/>
            <person name="Dusi R."/>
            <person name="Hamilton C.J."/>
            <person name="Helmann J.D."/>
        </authorList>
    </citation>
    <scope>FUNCTION</scope>
</reference>
<reference key="6">
    <citation type="journal article" date="2019" name="J. Biol. Chem.">
        <title>Sustained sensing in potassium homeostasis: Cyclic di-AMP controls potassium uptake by KimA at the levels of expression and activity.</title>
        <authorList>
            <person name="Gundlach J."/>
            <person name="Krueger L."/>
            <person name="Herzberg C."/>
            <person name="Turdiev A."/>
            <person name="Poehlein A."/>
            <person name="Tascon I."/>
            <person name="Weiss M."/>
            <person name="Hertel D."/>
            <person name="Daniel R."/>
            <person name="Haenelt I."/>
            <person name="Lee V.T."/>
            <person name="Stuelke J."/>
        </authorList>
    </citation>
    <scope>ACTIVITY REGULATION</scope>
    <source>
        <strain>168</strain>
    </source>
</reference>
<evidence type="ECO:0000255" key="1">
    <source>
        <dbReference type="PROSITE-ProRule" id="PRU00544"/>
    </source>
</evidence>
<evidence type="ECO:0000269" key="2">
    <source>
    </source>
</evidence>
<evidence type="ECO:0000269" key="3">
    <source>
    </source>
</evidence>
<evidence type="ECO:0000269" key="4">
    <source>
    </source>
</evidence>
<evidence type="ECO:0000269" key="5">
    <source>
    </source>
</evidence>
<evidence type="ECO:0000303" key="6">
    <source>
    </source>
</evidence>
<evidence type="ECO:0000305" key="7"/>
<evidence type="ECO:0000305" key="8">
    <source>
    </source>
</evidence>
<evidence type="ECO:0007829" key="9">
    <source>
        <dbReference type="PDB" id="7AGV"/>
    </source>
</evidence>
<evidence type="ECO:0007829" key="10">
    <source>
        <dbReference type="PDB" id="7AGW"/>
    </source>
</evidence>
<evidence type="ECO:0007829" key="11">
    <source>
        <dbReference type="PDB" id="7AHM"/>
    </source>
</evidence>
<accession>O07535</accession>
<accession>Q796V6</accession>
<name>KHTT_BACSU</name>
<comment type="function">
    <text evidence="2 3 4">Required for activity of the potassium/proton antiporter KhtU (PubMed:14987767, PubMed:17679694). Involved in protection of the cell from methylglyoxal, a toxic by-product of glycolysis (PubMed:24330391).</text>
</comment>
<comment type="activity regulation">
    <text evidence="5">Binds cyclic di-AMP (c-di-AMP), which may regulate the activity.</text>
</comment>
<comment type="subunit">
    <text evidence="2 3">The transporter is composed of the integral membrane protein KhtU and the regulatory protein KhtT.</text>
</comment>
<comment type="subcellular location">
    <subcellularLocation>
        <location evidence="8">Cell membrane</location>
        <topology evidence="8">Peripheral membrane protein</topology>
        <orientation evidence="8">Cytoplasmic side</orientation>
    </subcellularLocation>
</comment>
<comment type="induction">
    <text evidence="2">Part of the khtSTU operon. Induced by salt stress at alkaline pH.</text>
</comment>